<reference key="1">
    <citation type="journal article" date="2002" name="Environ. Microbiol.">
        <title>Complete genome sequence and comparative analysis of the metabolically versatile Pseudomonas putida KT2440.</title>
        <authorList>
            <person name="Nelson K.E."/>
            <person name="Weinel C."/>
            <person name="Paulsen I.T."/>
            <person name="Dodson R.J."/>
            <person name="Hilbert H."/>
            <person name="Martins dos Santos V.A.P."/>
            <person name="Fouts D.E."/>
            <person name="Gill S.R."/>
            <person name="Pop M."/>
            <person name="Holmes M."/>
            <person name="Brinkac L.M."/>
            <person name="Beanan M.J."/>
            <person name="DeBoy R.T."/>
            <person name="Daugherty S.C."/>
            <person name="Kolonay J.F."/>
            <person name="Madupu R."/>
            <person name="Nelson W.C."/>
            <person name="White O."/>
            <person name="Peterson J.D."/>
            <person name="Khouri H.M."/>
            <person name="Hance I."/>
            <person name="Chris Lee P."/>
            <person name="Holtzapple E.K."/>
            <person name="Scanlan D."/>
            <person name="Tran K."/>
            <person name="Moazzez A."/>
            <person name="Utterback T.R."/>
            <person name="Rizzo M."/>
            <person name="Lee K."/>
            <person name="Kosack D."/>
            <person name="Moestl D."/>
            <person name="Wedler H."/>
            <person name="Lauber J."/>
            <person name="Stjepandic D."/>
            <person name="Hoheisel J."/>
            <person name="Straetz M."/>
            <person name="Heim S."/>
            <person name="Kiewitz C."/>
            <person name="Eisen J.A."/>
            <person name="Timmis K.N."/>
            <person name="Duesterhoeft A."/>
            <person name="Tuemmler B."/>
            <person name="Fraser C.M."/>
        </authorList>
    </citation>
    <scope>NUCLEOTIDE SEQUENCE [LARGE SCALE GENOMIC DNA]</scope>
    <source>
        <strain>ATCC 47054 / DSM 6125 / CFBP 8728 / NCIMB 11950 / KT2440</strain>
    </source>
</reference>
<feature type="chain" id="PRO_0000207345" description="Urocanate hydratase">
    <location>
        <begin position="1"/>
        <end position="557"/>
    </location>
</feature>
<feature type="active site" evidence="1">
    <location>
        <position position="411"/>
    </location>
</feature>
<feature type="binding site" evidence="1">
    <location>
        <begin position="53"/>
        <end position="54"/>
    </location>
    <ligand>
        <name>NAD(+)</name>
        <dbReference type="ChEBI" id="CHEBI:57540"/>
    </ligand>
</feature>
<feature type="binding site" evidence="1">
    <location>
        <position position="131"/>
    </location>
    <ligand>
        <name>NAD(+)</name>
        <dbReference type="ChEBI" id="CHEBI:57540"/>
    </ligand>
</feature>
<feature type="binding site" evidence="1">
    <location>
        <begin position="177"/>
        <end position="179"/>
    </location>
    <ligand>
        <name>NAD(+)</name>
        <dbReference type="ChEBI" id="CHEBI:57540"/>
    </ligand>
</feature>
<feature type="binding site" evidence="1">
    <location>
        <position position="197"/>
    </location>
    <ligand>
        <name>NAD(+)</name>
        <dbReference type="ChEBI" id="CHEBI:57540"/>
    </ligand>
</feature>
<feature type="binding site" evidence="1">
    <location>
        <position position="202"/>
    </location>
    <ligand>
        <name>NAD(+)</name>
        <dbReference type="ChEBI" id="CHEBI:57540"/>
    </ligand>
</feature>
<feature type="binding site" evidence="1">
    <location>
        <begin position="243"/>
        <end position="244"/>
    </location>
    <ligand>
        <name>NAD(+)</name>
        <dbReference type="ChEBI" id="CHEBI:57540"/>
    </ligand>
</feature>
<feature type="binding site" evidence="1">
    <location>
        <begin position="264"/>
        <end position="268"/>
    </location>
    <ligand>
        <name>NAD(+)</name>
        <dbReference type="ChEBI" id="CHEBI:57540"/>
    </ligand>
</feature>
<feature type="binding site" evidence="1">
    <location>
        <begin position="274"/>
        <end position="275"/>
    </location>
    <ligand>
        <name>NAD(+)</name>
        <dbReference type="ChEBI" id="CHEBI:57540"/>
    </ligand>
</feature>
<feature type="binding site" evidence="1">
    <location>
        <position position="323"/>
    </location>
    <ligand>
        <name>NAD(+)</name>
        <dbReference type="ChEBI" id="CHEBI:57540"/>
    </ligand>
</feature>
<feature type="binding site" evidence="1">
    <location>
        <position position="493"/>
    </location>
    <ligand>
        <name>NAD(+)</name>
        <dbReference type="ChEBI" id="CHEBI:57540"/>
    </ligand>
</feature>
<name>HUTU_PSEPK</name>
<gene>
    <name evidence="1" type="primary">hutU</name>
    <name type="ordered locus">PP_5033</name>
</gene>
<sequence length="557" mass="60718">MTDNNKYRDVEIRAPRGNKLTAKSWLTEAPLRMLMNNLDPQVAENPKELVVYGGIGRAARNWACYDKIVETLTRLEDDETLLVQSGKPVGVFKTHSNAPRVLIANSNLVPHWANWEHFNELDAKGLAMYGQMTAGSWIYIGSQGIVQGTYETFVEAGRQHYGGSLKGKWVLTAGLGGMGGAQPLAATLAGACSLNIECQQSRIDFRLETRYVDEQATDLDDALARIAKYTAEGKAISIALHGNAAEILPELVKRGVRPDMVTDQTSAHDPLNGYLPAGWTWEQYRDRAQTEPAAVVKAAKQSMAVHVQAMLDFQKQGIPTFDYGNNIRQMAKEEGVANAFDFPGFVPAYIRPLFCRGVGPFRWAALSGEAEDIYKTDAKVKELIPDDAHLHRWLDMARERISFQGLPARICWVGLGLRAKLGLAFNEMVRSGELSAPVVIGRDHLDSGSVSSPNRETEAMRDGSDAVSDWPLLNALLNTAGGATWVSLHHGGGVGMGFSQHSGMVIVCDGTDEAAERIARVLTNDPGTGVMRHADAGYDIAIDCAKEQGLDLPMITG</sequence>
<comment type="function">
    <text evidence="1">Catalyzes the conversion of urocanate to 4-imidazolone-5-propionate.</text>
</comment>
<comment type="catalytic activity">
    <reaction evidence="1">
        <text>4-imidazolone-5-propanoate = trans-urocanate + H2O</text>
        <dbReference type="Rhea" id="RHEA:13101"/>
        <dbReference type="ChEBI" id="CHEBI:15377"/>
        <dbReference type="ChEBI" id="CHEBI:17771"/>
        <dbReference type="ChEBI" id="CHEBI:77893"/>
        <dbReference type="EC" id="4.2.1.49"/>
    </reaction>
</comment>
<comment type="cofactor">
    <cofactor evidence="1">
        <name>NAD(+)</name>
        <dbReference type="ChEBI" id="CHEBI:57540"/>
    </cofactor>
    <text evidence="1">Binds 1 NAD(+) per subunit.</text>
</comment>
<comment type="pathway">
    <text evidence="1">Amino-acid degradation; L-histidine degradation into L-glutamate; N-formimidoyl-L-glutamate from L-histidine: step 2/3.</text>
</comment>
<comment type="subcellular location">
    <subcellularLocation>
        <location evidence="1">Cytoplasm</location>
    </subcellularLocation>
</comment>
<comment type="similarity">
    <text evidence="1">Belongs to the urocanase family.</text>
</comment>
<evidence type="ECO:0000255" key="1">
    <source>
        <dbReference type="HAMAP-Rule" id="MF_00577"/>
    </source>
</evidence>
<dbReference type="EC" id="4.2.1.49" evidence="1"/>
<dbReference type="EMBL" id="AE015451">
    <property type="protein sequence ID" value="AAN70598.1"/>
    <property type="molecule type" value="Genomic_DNA"/>
</dbReference>
<dbReference type="RefSeq" id="NP_747134.1">
    <property type="nucleotide sequence ID" value="NC_002947.4"/>
</dbReference>
<dbReference type="RefSeq" id="WP_004577162.1">
    <property type="nucleotide sequence ID" value="NZ_CP169744.1"/>
</dbReference>
<dbReference type="SMR" id="Q88CZ6"/>
<dbReference type="STRING" id="160488.PP_5033"/>
<dbReference type="DrugBank" id="DB01971">
    <property type="generic name" value="trans-urocanic acid"/>
</dbReference>
<dbReference type="PaxDb" id="160488-PP_5033"/>
<dbReference type="GeneID" id="83682767"/>
<dbReference type="KEGG" id="ppu:PP_5033"/>
<dbReference type="PATRIC" id="fig|160488.4.peg.5374"/>
<dbReference type="eggNOG" id="COG2987">
    <property type="taxonomic scope" value="Bacteria"/>
</dbReference>
<dbReference type="HOGENOM" id="CLU_018868_0_1_6"/>
<dbReference type="OrthoDB" id="9764874at2"/>
<dbReference type="PhylomeDB" id="Q88CZ6"/>
<dbReference type="BioCyc" id="PPUT160488:G1G01-5378-MONOMER"/>
<dbReference type="UniPathway" id="UPA00379">
    <property type="reaction ID" value="UER00550"/>
</dbReference>
<dbReference type="Proteomes" id="UP000000556">
    <property type="component" value="Chromosome"/>
</dbReference>
<dbReference type="GO" id="GO:0005737">
    <property type="term" value="C:cytoplasm"/>
    <property type="evidence" value="ECO:0007669"/>
    <property type="project" value="UniProtKB-SubCell"/>
</dbReference>
<dbReference type="GO" id="GO:0016153">
    <property type="term" value="F:urocanate hydratase activity"/>
    <property type="evidence" value="ECO:0007669"/>
    <property type="project" value="UniProtKB-UniRule"/>
</dbReference>
<dbReference type="GO" id="GO:0019556">
    <property type="term" value="P:L-histidine catabolic process to glutamate and formamide"/>
    <property type="evidence" value="ECO:0007669"/>
    <property type="project" value="UniProtKB-UniPathway"/>
</dbReference>
<dbReference type="GO" id="GO:0019557">
    <property type="term" value="P:L-histidine catabolic process to glutamate and formate"/>
    <property type="evidence" value="ECO:0007669"/>
    <property type="project" value="UniProtKB-UniPathway"/>
</dbReference>
<dbReference type="FunFam" id="3.40.50.10730:FF:000001">
    <property type="entry name" value="Urocanate hydratase"/>
    <property type="match status" value="1"/>
</dbReference>
<dbReference type="Gene3D" id="3.40.50.10730">
    <property type="entry name" value="Urocanase like domains"/>
    <property type="match status" value="1"/>
</dbReference>
<dbReference type="Gene3D" id="3.40.1770.10">
    <property type="entry name" value="Urocanase superfamily"/>
    <property type="match status" value="1"/>
</dbReference>
<dbReference type="HAMAP" id="MF_00577">
    <property type="entry name" value="HutU"/>
    <property type="match status" value="1"/>
</dbReference>
<dbReference type="InterPro" id="IPR055351">
    <property type="entry name" value="Urocanase"/>
</dbReference>
<dbReference type="InterPro" id="IPR023637">
    <property type="entry name" value="Urocanase-like"/>
</dbReference>
<dbReference type="InterPro" id="IPR035401">
    <property type="entry name" value="Urocanase_C"/>
</dbReference>
<dbReference type="InterPro" id="IPR038364">
    <property type="entry name" value="Urocanase_central_sf"/>
</dbReference>
<dbReference type="InterPro" id="IPR023636">
    <property type="entry name" value="Urocanase_CS"/>
</dbReference>
<dbReference type="InterPro" id="IPR035400">
    <property type="entry name" value="Urocanase_N"/>
</dbReference>
<dbReference type="InterPro" id="IPR035085">
    <property type="entry name" value="Urocanase_Rossmann-like"/>
</dbReference>
<dbReference type="InterPro" id="IPR036190">
    <property type="entry name" value="Urocanase_sf"/>
</dbReference>
<dbReference type="NCBIfam" id="TIGR01228">
    <property type="entry name" value="hutU"/>
    <property type="match status" value="1"/>
</dbReference>
<dbReference type="NCBIfam" id="NF003820">
    <property type="entry name" value="PRK05414.1"/>
    <property type="match status" value="1"/>
</dbReference>
<dbReference type="PANTHER" id="PTHR12216">
    <property type="entry name" value="UROCANATE HYDRATASE"/>
    <property type="match status" value="1"/>
</dbReference>
<dbReference type="PANTHER" id="PTHR12216:SF4">
    <property type="entry name" value="UROCANATE HYDRATASE"/>
    <property type="match status" value="1"/>
</dbReference>
<dbReference type="Pfam" id="PF01175">
    <property type="entry name" value="Urocanase"/>
    <property type="match status" value="1"/>
</dbReference>
<dbReference type="Pfam" id="PF17392">
    <property type="entry name" value="Urocanase_C"/>
    <property type="match status" value="1"/>
</dbReference>
<dbReference type="Pfam" id="PF17391">
    <property type="entry name" value="Urocanase_N"/>
    <property type="match status" value="1"/>
</dbReference>
<dbReference type="PIRSF" id="PIRSF001423">
    <property type="entry name" value="Urocanate_hydrat"/>
    <property type="match status" value="1"/>
</dbReference>
<dbReference type="SUPFAM" id="SSF111326">
    <property type="entry name" value="Urocanase"/>
    <property type="match status" value="1"/>
</dbReference>
<dbReference type="PROSITE" id="PS01233">
    <property type="entry name" value="UROCANASE"/>
    <property type="match status" value="1"/>
</dbReference>
<proteinExistence type="inferred from homology"/>
<accession>Q88CZ6</accession>
<protein>
    <recommendedName>
        <fullName evidence="1">Urocanate hydratase</fullName>
        <shortName evidence="1">Urocanase</shortName>
        <ecNumber evidence="1">4.2.1.49</ecNumber>
    </recommendedName>
    <alternativeName>
        <fullName evidence="1">Imidazolonepropionate hydrolase</fullName>
    </alternativeName>
</protein>
<keyword id="KW-0963">Cytoplasm</keyword>
<keyword id="KW-0369">Histidine metabolism</keyword>
<keyword id="KW-0456">Lyase</keyword>
<keyword id="KW-0520">NAD</keyword>
<keyword id="KW-1185">Reference proteome</keyword>
<organism>
    <name type="scientific">Pseudomonas putida (strain ATCC 47054 / DSM 6125 / CFBP 8728 / NCIMB 11950 / KT2440)</name>
    <dbReference type="NCBI Taxonomy" id="160488"/>
    <lineage>
        <taxon>Bacteria</taxon>
        <taxon>Pseudomonadati</taxon>
        <taxon>Pseudomonadota</taxon>
        <taxon>Gammaproteobacteria</taxon>
        <taxon>Pseudomonadales</taxon>
        <taxon>Pseudomonadaceae</taxon>
        <taxon>Pseudomonas</taxon>
    </lineage>
</organism>